<sequence>MREKVYLKFEEMPKVYYNVLADLPFELDPPLDPETNKPISPEKLLAIFPEPLLEQEVSKERFIPIPEPVLKEYAVYRPTPLVRATFLEEYLRTRTKIYYKYEGVSPTGSHKVNTAIAQAYYNKIAGTKTLVTETGAGQWGSALSYAGQKFGLDVRIFMVKVSYQQKPFRKILMNLFGGDVQPSPSNLTQIGRQFSEDHPGTLGIAISEAIHTVLNEKDAKYSLGSVLNHVLLHQTIIGLEMKKQLEIIGIKPDIIVACHGGGSNFGGSALPFIPDVLSGKNIKIVAVEPESCPSLTKGEYRYDFGDTAGLTPLMKMYTLGKDFVPPAIHAGGLRYHGASPIVSKLYHERLIDAASVTQEEVFEAGKLFAKLEGIVPAPESAHAIAYVIKEAKKGDKESIVFTLSGHGYFDLNAYINQ</sequence>
<organism>
    <name type="scientific">Fervidobacterium nodosum (strain ATCC 35602 / DSM 5306 / Rt17-B1)</name>
    <dbReference type="NCBI Taxonomy" id="381764"/>
    <lineage>
        <taxon>Bacteria</taxon>
        <taxon>Thermotogati</taxon>
        <taxon>Thermotogota</taxon>
        <taxon>Thermotogae</taxon>
        <taxon>Thermotogales</taxon>
        <taxon>Fervidobacteriaceae</taxon>
        <taxon>Fervidobacterium</taxon>
    </lineage>
</organism>
<proteinExistence type="inferred from homology"/>
<protein>
    <recommendedName>
        <fullName evidence="1">Tryptophan synthase beta chain</fullName>
        <ecNumber evidence="1">4.2.1.20</ecNumber>
    </recommendedName>
</protein>
<dbReference type="EC" id="4.2.1.20" evidence="1"/>
<dbReference type="EMBL" id="CP000771">
    <property type="protein sequence ID" value="ABS61101.1"/>
    <property type="molecule type" value="Genomic_DNA"/>
</dbReference>
<dbReference type="RefSeq" id="WP_011994411.1">
    <property type="nucleotide sequence ID" value="NC_009718.1"/>
</dbReference>
<dbReference type="SMR" id="A7HMG8"/>
<dbReference type="STRING" id="381764.Fnod_1254"/>
<dbReference type="KEGG" id="fno:Fnod_1254"/>
<dbReference type="eggNOG" id="COG1350">
    <property type="taxonomic scope" value="Bacteria"/>
</dbReference>
<dbReference type="HOGENOM" id="CLU_042858_1_0_0"/>
<dbReference type="OrthoDB" id="9766131at2"/>
<dbReference type="UniPathway" id="UPA00035">
    <property type="reaction ID" value="UER00044"/>
</dbReference>
<dbReference type="Proteomes" id="UP000002415">
    <property type="component" value="Chromosome"/>
</dbReference>
<dbReference type="GO" id="GO:0005737">
    <property type="term" value="C:cytoplasm"/>
    <property type="evidence" value="ECO:0007669"/>
    <property type="project" value="TreeGrafter"/>
</dbReference>
<dbReference type="GO" id="GO:0052684">
    <property type="term" value="F:L-serine hydro-lyase (adding indole, L-tryptophan-forming) activity"/>
    <property type="evidence" value="ECO:0007669"/>
    <property type="project" value="TreeGrafter"/>
</dbReference>
<dbReference type="GO" id="GO:0030170">
    <property type="term" value="F:pyridoxal phosphate binding"/>
    <property type="evidence" value="ECO:0007669"/>
    <property type="project" value="InterPro"/>
</dbReference>
<dbReference type="GO" id="GO:0004834">
    <property type="term" value="F:tryptophan synthase activity"/>
    <property type="evidence" value="ECO:0007669"/>
    <property type="project" value="UniProtKB-UniRule"/>
</dbReference>
<dbReference type="CDD" id="cd06446">
    <property type="entry name" value="Trp-synth_B"/>
    <property type="match status" value="1"/>
</dbReference>
<dbReference type="Gene3D" id="3.40.50.1100">
    <property type="match status" value="2"/>
</dbReference>
<dbReference type="HAMAP" id="MF_00133">
    <property type="entry name" value="Trp_synth_beta"/>
    <property type="match status" value="1"/>
</dbReference>
<dbReference type="InterPro" id="IPR006316">
    <property type="entry name" value="Trp_synth_b-like"/>
</dbReference>
<dbReference type="InterPro" id="IPR006653">
    <property type="entry name" value="Trp_synth_b_CS"/>
</dbReference>
<dbReference type="InterPro" id="IPR006654">
    <property type="entry name" value="Trp_synth_beta"/>
</dbReference>
<dbReference type="InterPro" id="IPR023026">
    <property type="entry name" value="Trp_synth_beta/beta-like"/>
</dbReference>
<dbReference type="InterPro" id="IPR001926">
    <property type="entry name" value="TrpB-like_PALP"/>
</dbReference>
<dbReference type="InterPro" id="IPR036052">
    <property type="entry name" value="TrpB-like_PALP_sf"/>
</dbReference>
<dbReference type="NCBIfam" id="NF009057">
    <property type="entry name" value="PRK12391.1"/>
    <property type="match status" value="1"/>
</dbReference>
<dbReference type="NCBIfam" id="TIGR01415">
    <property type="entry name" value="trpB_rel"/>
    <property type="match status" value="1"/>
</dbReference>
<dbReference type="PANTHER" id="PTHR48077:SF6">
    <property type="entry name" value="TRYPTOPHAN SYNTHASE"/>
    <property type="match status" value="1"/>
</dbReference>
<dbReference type="PANTHER" id="PTHR48077">
    <property type="entry name" value="TRYPTOPHAN SYNTHASE-RELATED"/>
    <property type="match status" value="1"/>
</dbReference>
<dbReference type="Pfam" id="PF00291">
    <property type="entry name" value="PALP"/>
    <property type="match status" value="1"/>
</dbReference>
<dbReference type="PIRSF" id="PIRSF001413">
    <property type="entry name" value="Trp_syn_beta"/>
    <property type="match status" value="1"/>
</dbReference>
<dbReference type="PIRSF" id="PIRSF500824">
    <property type="entry name" value="TrpB_prok"/>
    <property type="match status" value="1"/>
</dbReference>
<dbReference type="SUPFAM" id="SSF53686">
    <property type="entry name" value="Tryptophan synthase beta subunit-like PLP-dependent enzymes"/>
    <property type="match status" value="1"/>
</dbReference>
<dbReference type="PROSITE" id="PS00168">
    <property type="entry name" value="TRP_SYNTHASE_BETA"/>
    <property type="match status" value="1"/>
</dbReference>
<feature type="chain" id="PRO_1000095790" description="Tryptophan synthase beta chain">
    <location>
        <begin position="1"/>
        <end position="417"/>
    </location>
</feature>
<feature type="modified residue" description="N6-(pyridoxal phosphate)lysine" evidence="1">
    <location>
        <position position="111"/>
    </location>
</feature>
<reference key="1">
    <citation type="submission" date="2007-07" db="EMBL/GenBank/DDBJ databases">
        <title>Complete sequence of Fervidobacterium nodosum Rt17-B1.</title>
        <authorList>
            <consortium name="US DOE Joint Genome Institute"/>
            <person name="Copeland A."/>
            <person name="Lucas S."/>
            <person name="Lapidus A."/>
            <person name="Barry K."/>
            <person name="Glavina del Rio T."/>
            <person name="Dalin E."/>
            <person name="Tice H."/>
            <person name="Pitluck S."/>
            <person name="Saunders E."/>
            <person name="Brettin T."/>
            <person name="Bruce D."/>
            <person name="Detter J.C."/>
            <person name="Han C."/>
            <person name="Schmutz J."/>
            <person name="Larimer F."/>
            <person name="Land M."/>
            <person name="Hauser L."/>
            <person name="Kyrpides N."/>
            <person name="Mikhailova N."/>
            <person name="Nelson K."/>
            <person name="Gogarten J.P."/>
            <person name="Noll K."/>
            <person name="Richardson P."/>
        </authorList>
    </citation>
    <scope>NUCLEOTIDE SEQUENCE [LARGE SCALE GENOMIC DNA]</scope>
    <source>
        <strain>ATCC 35602 / DSM 5306 / Rt17-B1</strain>
    </source>
</reference>
<comment type="function">
    <text evidence="1">The beta subunit is responsible for the synthesis of L-tryptophan from indole and L-serine.</text>
</comment>
<comment type="catalytic activity">
    <reaction evidence="1">
        <text>(1S,2R)-1-C-(indol-3-yl)glycerol 3-phosphate + L-serine = D-glyceraldehyde 3-phosphate + L-tryptophan + H2O</text>
        <dbReference type="Rhea" id="RHEA:10532"/>
        <dbReference type="ChEBI" id="CHEBI:15377"/>
        <dbReference type="ChEBI" id="CHEBI:33384"/>
        <dbReference type="ChEBI" id="CHEBI:57912"/>
        <dbReference type="ChEBI" id="CHEBI:58866"/>
        <dbReference type="ChEBI" id="CHEBI:59776"/>
        <dbReference type="EC" id="4.2.1.20"/>
    </reaction>
</comment>
<comment type="cofactor">
    <cofactor evidence="1">
        <name>pyridoxal 5'-phosphate</name>
        <dbReference type="ChEBI" id="CHEBI:597326"/>
    </cofactor>
</comment>
<comment type="pathway">
    <text evidence="1">Amino-acid biosynthesis; L-tryptophan biosynthesis; L-tryptophan from chorismate: step 5/5.</text>
</comment>
<comment type="subunit">
    <text evidence="1">Tetramer of two alpha and two beta chains.</text>
</comment>
<comment type="similarity">
    <text evidence="1">Belongs to the TrpB family.</text>
</comment>
<gene>
    <name evidence="1" type="primary">trpB</name>
    <name type="ordered locus">Fnod_1254</name>
</gene>
<evidence type="ECO:0000255" key="1">
    <source>
        <dbReference type="HAMAP-Rule" id="MF_00133"/>
    </source>
</evidence>
<accession>A7HMG8</accession>
<keyword id="KW-0028">Amino-acid biosynthesis</keyword>
<keyword id="KW-0057">Aromatic amino acid biosynthesis</keyword>
<keyword id="KW-0456">Lyase</keyword>
<keyword id="KW-0663">Pyridoxal phosphate</keyword>
<keyword id="KW-1185">Reference proteome</keyword>
<keyword id="KW-0822">Tryptophan biosynthesis</keyword>
<name>TRPB_FERNB</name>